<name>RUVC_SINFN</name>
<accession>C3MIH7</accession>
<gene>
    <name evidence="1" type="primary">ruvC</name>
    <name type="ordered locus">NGR_c27930</name>
</gene>
<keyword id="KW-0963">Cytoplasm</keyword>
<keyword id="KW-0227">DNA damage</keyword>
<keyword id="KW-0233">DNA recombination</keyword>
<keyword id="KW-0234">DNA repair</keyword>
<keyword id="KW-0238">DNA-binding</keyword>
<keyword id="KW-0255">Endonuclease</keyword>
<keyword id="KW-0378">Hydrolase</keyword>
<keyword id="KW-0460">Magnesium</keyword>
<keyword id="KW-0479">Metal-binding</keyword>
<keyword id="KW-0540">Nuclease</keyword>
<keyword id="KW-1185">Reference proteome</keyword>
<feature type="chain" id="PRO_1000195268" description="Crossover junction endodeoxyribonuclease RuvC">
    <location>
        <begin position="1"/>
        <end position="170"/>
    </location>
</feature>
<feature type="active site" evidence="1">
    <location>
        <position position="11"/>
    </location>
</feature>
<feature type="active site" evidence="1">
    <location>
        <position position="71"/>
    </location>
</feature>
<feature type="active site" evidence="1">
    <location>
        <position position="143"/>
    </location>
</feature>
<feature type="binding site" evidence="1">
    <location>
        <position position="11"/>
    </location>
    <ligand>
        <name>Mg(2+)</name>
        <dbReference type="ChEBI" id="CHEBI:18420"/>
        <label>1</label>
    </ligand>
</feature>
<feature type="binding site" evidence="1">
    <location>
        <position position="71"/>
    </location>
    <ligand>
        <name>Mg(2+)</name>
        <dbReference type="ChEBI" id="CHEBI:18420"/>
        <label>2</label>
    </ligand>
</feature>
<feature type="binding site" evidence="1">
    <location>
        <position position="143"/>
    </location>
    <ligand>
        <name>Mg(2+)</name>
        <dbReference type="ChEBI" id="CHEBI:18420"/>
        <label>1</label>
    </ligand>
</feature>
<protein>
    <recommendedName>
        <fullName evidence="1">Crossover junction endodeoxyribonuclease RuvC</fullName>
        <ecNumber evidence="1">3.1.21.10</ecNumber>
    </recommendedName>
    <alternativeName>
        <fullName evidence="1">Holliday junction nuclease RuvC</fullName>
    </alternativeName>
    <alternativeName>
        <fullName evidence="1">Holliday junction resolvase RuvC</fullName>
    </alternativeName>
</protein>
<evidence type="ECO:0000255" key="1">
    <source>
        <dbReference type="HAMAP-Rule" id="MF_00034"/>
    </source>
</evidence>
<dbReference type="EC" id="3.1.21.10" evidence="1"/>
<dbReference type="EMBL" id="CP001389">
    <property type="protein sequence ID" value="ACP26540.1"/>
    <property type="molecule type" value="Genomic_DNA"/>
</dbReference>
<dbReference type="RefSeq" id="WP_012709296.1">
    <property type="nucleotide sequence ID" value="NC_012587.1"/>
</dbReference>
<dbReference type="RefSeq" id="YP_002827293.1">
    <property type="nucleotide sequence ID" value="NC_012587.1"/>
</dbReference>
<dbReference type="SMR" id="C3MIH7"/>
<dbReference type="STRING" id="394.NGR_c27930"/>
<dbReference type="KEGG" id="rhi:NGR_c27930"/>
<dbReference type="PATRIC" id="fig|394.7.peg.5628"/>
<dbReference type="eggNOG" id="COG0817">
    <property type="taxonomic scope" value="Bacteria"/>
</dbReference>
<dbReference type="HOGENOM" id="CLU_091257_1_0_5"/>
<dbReference type="OrthoDB" id="9805499at2"/>
<dbReference type="Proteomes" id="UP000001054">
    <property type="component" value="Chromosome"/>
</dbReference>
<dbReference type="GO" id="GO:0005737">
    <property type="term" value="C:cytoplasm"/>
    <property type="evidence" value="ECO:0007669"/>
    <property type="project" value="UniProtKB-SubCell"/>
</dbReference>
<dbReference type="GO" id="GO:0048476">
    <property type="term" value="C:Holliday junction resolvase complex"/>
    <property type="evidence" value="ECO:0007669"/>
    <property type="project" value="UniProtKB-UniRule"/>
</dbReference>
<dbReference type="GO" id="GO:0008821">
    <property type="term" value="F:crossover junction DNA endonuclease activity"/>
    <property type="evidence" value="ECO:0007669"/>
    <property type="project" value="UniProtKB-UniRule"/>
</dbReference>
<dbReference type="GO" id="GO:0003677">
    <property type="term" value="F:DNA binding"/>
    <property type="evidence" value="ECO:0007669"/>
    <property type="project" value="UniProtKB-KW"/>
</dbReference>
<dbReference type="GO" id="GO:0000287">
    <property type="term" value="F:magnesium ion binding"/>
    <property type="evidence" value="ECO:0007669"/>
    <property type="project" value="UniProtKB-UniRule"/>
</dbReference>
<dbReference type="GO" id="GO:0006310">
    <property type="term" value="P:DNA recombination"/>
    <property type="evidence" value="ECO:0007669"/>
    <property type="project" value="UniProtKB-UniRule"/>
</dbReference>
<dbReference type="GO" id="GO:0006281">
    <property type="term" value="P:DNA repair"/>
    <property type="evidence" value="ECO:0007669"/>
    <property type="project" value="UniProtKB-UniRule"/>
</dbReference>
<dbReference type="CDD" id="cd16962">
    <property type="entry name" value="RuvC"/>
    <property type="match status" value="1"/>
</dbReference>
<dbReference type="FunFam" id="3.30.420.10:FF:000002">
    <property type="entry name" value="Crossover junction endodeoxyribonuclease RuvC"/>
    <property type="match status" value="1"/>
</dbReference>
<dbReference type="Gene3D" id="3.30.420.10">
    <property type="entry name" value="Ribonuclease H-like superfamily/Ribonuclease H"/>
    <property type="match status" value="1"/>
</dbReference>
<dbReference type="HAMAP" id="MF_00034">
    <property type="entry name" value="RuvC"/>
    <property type="match status" value="1"/>
</dbReference>
<dbReference type="InterPro" id="IPR012337">
    <property type="entry name" value="RNaseH-like_sf"/>
</dbReference>
<dbReference type="InterPro" id="IPR036397">
    <property type="entry name" value="RNaseH_sf"/>
</dbReference>
<dbReference type="InterPro" id="IPR020563">
    <property type="entry name" value="X-over_junc_endoDNase_Mg_BS"/>
</dbReference>
<dbReference type="InterPro" id="IPR002176">
    <property type="entry name" value="X-over_junc_endoDNase_RuvC"/>
</dbReference>
<dbReference type="NCBIfam" id="TIGR00228">
    <property type="entry name" value="ruvC"/>
    <property type="match status" value="1"/>
</dbReference>
<dbReference type="PANTHER" id="PTHR30194">
    <property type="entry name" value="CROSSOVER JUNCTION ENDODEOXYRIBONUCLEASE RUVC"/>
    <property type="match status" value="1"/>
</dbReference>
<dbReference type="PANTHER" id="PTHR30194:SF3">
    <property type="entry name" value="CROSSOVER JUNCTION ENDODEOXYRIBONUCLEASE RUVC"/>
    <property type="match status" value="1"/>
</dbReference>
<dbReference type="Pfam" id="PF02075">
    <property type="entry name" value="RuvC"/>
    <property type="match status" value="1"/>
</dbReference>
<dbReference type="PRINTS" id="PR00696">
    <property type="entry name" value="RSOLVASERUVC"/>
</dbReference>
<dbReference type="SUPFAM" id="SSF53098">
    <property type="entry name" value="Ribonuclease H-like"/>
    <property type="match status" value="1"/>
</dbReference>
<dbReference type="PROSITE" id="PS01321">
    <property type="entry name" value="RUVC"/>
    <property type="match status" value="1"/>
</dbReference>
<reference key="1">
    <citation type="journal article" date="2009" name="Appl. Environ. Microbiol.">
        <title>Rhizobium sp. strain NGR234 possesses a remarkable number of secretion systems.</title>
        <authorList>
            <person name="Schmeisser C."/>
            <person name="Liesegang H."/>
            <person name="Krysciak D."/>
            <person name="Bakkou N."/>
            <person name="Le Quere A."/>
            <person name="Wollherr A."/>
            <person name="Heinemeyer I."/>
            <person name="Morgenstern B."/>
            <person name="Pommerening-Roeser A."/>
            <person name="Flores M."/>
            <person name="Palacios R."/>
            <person name="Brenner S."/>
            <person name="Gottschalk G."/>
            <person name="Schmitz R.A."/>
            <person name="Broughton W.J."/>
            <person name="Perret X."/>
            <person name="Strittmatter A.W."/>
            <person name="Streit W.R."/>
        </authorList>
    </citation>
    <scope>NUCLEOTIDE SEQUENCE [LARGE SCALE GENOMIC DNA]</scope>
    <source>
        <strain>NBRC 101917 / NGR234</strain>
    </source>
</reference>
<sequence>MQTTIRIIGIDPGLRRTGWGIIETLGNSLRFVASGTVTSDGEMDLASRLCQLHDGLAEVVHGYQPHEAAVEQTFVNKDATATLKLGQARGIAMLVPARAGLRVAEYAPNAVKKAVIGVGHGEKQQIHMMLKVLMPKAEFKGNDAADALAIAICHAHNRQAVTSRLAALAG</sequence>
<proteinExistence type="inferred from homology"/>
<organism>
    <name type="scientific">Sinorhizobium fredii (strain NBRC 101917 / NGR234)</name>
    <dbReference type="NCBI Taxonomy" id="394"/>
    <lineage>
        <taxon>Bacteria</taxon>
        <taxon>Pseudomonadati</taxon>
        <taxon>Pseudomonadota</taxon>
        <taxon>Alphaproteobacteria</taxon>
        <taxon>Hyphomicrobiales</taxon>
        <taxon>Rhizobiaceae</taxon>
        <taxon>Sinorhizobium/Ensifer group</taxon>
        <taxon>Sinorhizobium</taxon>
    </lineage>
</organism>
<comment type="function">
    <text evidence="1">The RuvA-RuvB-RuvC complex processes Holliday junction (HJ) DNA during genetic recombination and DNA repair. Endonuclease that resolves HJ intermediates. Cleaves cruciform DNA by making single-stranded nicks across the HJ at symmetrical positions within the homologous arms, yielding a 5'-phosphate and a 3'-hydroxyl group; requires a central core of homology in the junction. The consensus cleavage sequence is 5'-(A/T)TT(C/G)-3'. Cleavage occurs on the 3'-side of the TT dinucleotide at the point of strand exchange. HJ branch migration catalyzed by RuvA-RuvB allows RuvC to scan DNA until it finds its consensus sequence, where it cleaves and resolves the cruciform DNA.</text>
</comment>
<comment type="catalytic activity">
    <reaction evidence="1">
        <text>Endonucleolytic cleavage at a junction such as a reciprocal single-stranded crossover between two homologous DNA duplexes (Holliday junction).</text>
        <dbReference type="EC" id="3.1.21.10"/>
    </reaction>
</comment>
<comment type="cofactor">
    <cofactor evidence="1">
        <name>Mg(2+)</name>
        <dbReference type="ChEBI" id="CHEBI:18420"/>
    </cofactor>
    <text evidence="1">Binds 2 Mg(2+) ion per subunit.</text>
</comment>
<comment type="subunit">
    <text evidence="1">Homodimer which binds Holliday junction (HJ) DNA. The HJ becomes 2-fold symmetrical on binding to RuvC with unstacked arms; it has a different conformation from HJ DNA in complex with RuvA. In the full resolvosome a probable DNA-RuvA(4)-RuvB(12)-RuvC(2) complex forms which resolves the HJ.</text>
</comment>
<comment type="subcellular location">
    <subcellularLocation>
        <location evidence="1">Cytoplasm</location>
    </subcellularLocation>
</comment>
<comment type="similarity">
    <text evidence="1">Belongs to the RuvC family.</text>
</comment>